<name>ASAH1_BOVIN</name>
<keyword id="KW-1015">Disulfide bond</keyword>
<keyword id="KW-0325">Glycoprotein</keyword>
<keyword id="KW-0378">Hydrolase</keyword>
<keyword id="KW-0443">Lipid metabolism</keyword>
<keyword id="KW-0458">Lysosome</keyword>
<keyword id="KW-1185">Reference proteome</keyword>
<keyword id="KW-0964">Secreted</keyword>
<keyword id="KW-0732">Signal</keyword>
<keyword id="KW-0746">Sphingolipid metabolism</keyword>
<keyword id="KW-0865">Zymogen</keyword>
<proteinExistence type="evidence at transcript level"/>
<sequence length="395" mass="44965">MLGWSRLTFILLSGIVTCLVAQQVPPWTEDCRKSTYPPSGPTYRGPVPWYTINLDLPPYKRWHELMVVKAPALKVIVNSMKNIVNAFVPSGKIIHLVDQKLPGLLGNFPGPFEEEMKGIAAVTEIPLGEIILFNIFYEFFTICTSIITEDKEGHLLHGRNLDFGVFLGWNINNDTWVITEELKPLTVNLDFQRNNKTLFKATTFAGYVGMLTGFKPGLFSVTLNERFSIDGGFMGVMEWILGKKDAQWVGFIIRSVLENSTSYEETKNILTKTKILAPAYFILGGNQSGEGCVITRDRKQSLDIYELDPKHGRWYVVQTNYDRWKNPFFLDDRRTPAKMCLNQTTQENISFATIYDVLSTKPILNKLTVYTVLIDVTKGQFETYLRDCPDPCIGW</sequence>
<comment type="function">
    <text evidence="2">Lysosomal ceramidase that hydrolyzes sphingolipid ceramides into sphingosine and free fatty acids at acidic pH (By similarity). Ceramides, sphingosine, and its phosphorylated form sphingosine-1-phosphate are bioactive lipids that mediate cellular signaling pathways regulating several biological processes including cell proliferation, apoptosis and differentiation (By similarity). Has a higher catalytic efficiency towards C12-ceramides versus other ceramides (By similarity). Also catalyzes the reverse reaction allowing the synthesis of ceramides from fatty acids and sphingosine (By similarity). For the reverse synthetic reaction, the natural sphingosine D-erythro isomer is more efficiently utilized as a substrate compared to D-erythro-dihydrosphingosine and D-erythro-phytosphingosine, while the fatty acids with chain lengths of 12 or 14 carbons are the most efficiently used (By similarity). Also has an N-acylethanolamine hydrolase activity (By similarity). By regulating the levels of ceramides, sphingosine and sphingosine-1-phosphate in the epidermis, mediates the calcium-induced differentiation of epidermal keratinocytes (By similarity). Also indirectly regulates tumor necrosis factor/TNF-induced apoptosis (By similarity). By regulating the intracellular balance between ceramides and sphingosine, in adrenocortical cells, probably also acts as a regulator of steroidogenesis (By similarity).</text>
</comment>
<comment type="catalytic activity">
    <reaction evidence="2">
        <text>an N-acylsphing-4-enine + H2O = sphing-4-enine + a fatty acid</text>
        <dbReference type="Rhea" id="RHEA:20856"/>
        <dbReference type="ChEBI" id="CHEBI:15377"/>
        <dbReference type="ChEBI" id="CHEBI:28868"/>
        <dbReference type="ChEBI" id="CHEBI:52639"/>
        <dbReference type="ChEBI" id="CHEBI:57756"/>
        <dbReference type="EC" id="3.5.1.23"/>
    </reaction>
</comment>
<comment type="catalytic activity">
    <reaction evidence="2">
        <text>N-dodecanoylsphing-4-enine + H2O = dodecanoate + sphing-4-enine</text>
        <dbReference type="Rhea" id="RHEA:41291"/>
        <dbReference type="ChEBI" id="CHEBI:15377"/>
        <dbReference type="ChEBI" id="CHEBI:18262"/>
        <dbReference type="ChEBI" id="CHEBI:57756"/>
        <dbReference type="ChEBI" id="CHEBI:72956"/>
    </reaction>
    <physiologicalReaction direction="left-to-right" evidence="2">
        <dbReference type="Rhea" id="RHEA:41292"/>
    </physiologicalReaction>
    <physiologicalReaction direction="right-to-left" evidence="2">
        <dbReference type="Rhea" id="RHEA:41293"/>
    </physiologicalReaction>
</comment>
<comment type="catalytic activity">
    <reaction evidence="2">
        <text>N-tetradecanoylsphing-4-enine + H2O = tetradecanoate + sphing-4-enine</text>
        <dbReference type="Rhea" id="RHEA:41287"/>
        <dbReference type="ChEBI" id="CHEBI:15377"/>
        <dbReference type="ChEBI" id="CHEBI:30807"/>
        <dbReference type="ChEBI" id="CHEBI:57756"/>
        <dbReference type="ChEBI" id="CHEBI:72957"/>
    </reaction>
    <physiologicalReaction direction="right-to-left" evidence="2">
        <dbReference type="Rhea" id="RHEA:41289"/>
    </physiologicalReaction>
</comment>
<comment type="catalytic activity">
    <reaction evidence="2">
        <text>N-hexadecanoylsphing-4-enine + H2O = sphing-4-enine + hexadecanoate</text>
        <dbReference type="Rhea" id="RHEA:38891"/>
        <dbReference type="ChEBI" id="CHEBI:7896"/>
        <dbReference type="ChEBI" id="CHEBI:15377"/>
        <dbReference type="ChEBI" id="CHEBI:57756"/>
        <dbReference type="ChEBI" id="CHEBI:72959"/>
    </reaction>
    <physiologicalReaction direction="left-to-right" evidence="2">
        <dbReference type="Rhea" id="RHEA:38892"/>
    </physiologicalReaction>
    <physiologicalReaction direction="right-to-left" evidence="2">
        <dbReference type="Rhea" id="RHEA:38893"/>
    </physiologicalReaction>
</comment>
<comment type="catalytic activity">
    <reaction evidence="2">
        <text>N-octadecanoylsphing-4-enine + H2O = sphing-4-enine + octadecanoate</text>
        <dbReference type="Rhea" id="RHEA:41279"/>
        <dbReference type="ChEBI" id="CHEBI:15377"/>
        <dbReference type="ChEBI" id="CHEBI:25629"/>
        <dbReference type="ChEBI" id="CHEBI:57756"/>
        <dbReference type="ChEBI" id="CHEBI:72961"/>
    </reaction>
    <physiologicalReaction direction="left-to-right" evidence="2">
        <dbReference type="Rhea" id="RHEA:41280"/>
    </physiologicalReaction>
    <physiologicalReaction direction="right-to-left" evidence="2">
        <dbReference type="Rhea" id="RHEA:41281"/>
    </physiologicalReaction>
</comment>
<comment type="catalytic activity">
    <reaction evidence="2">
        <text>N-dodecanoyl-(4R)-hydroxysphinganine + H2O = (4R)-hydroxysphinganine + dodecanoate</text>
        <dbReference type="Rhea" id="RHEA:41303"/>
        <dbReference type="ChEBI" id="CHEBI:15377"/>
        <dbReference type="ChEBI" id="CHEBI:18262"/>
        <dbReference type="ChEBI" id="CHEBI:64124"/>
        <dbReference type="ChEBI" id="CHEBI:78001"/>
    </reaction>
    <physiologicalReaction direction="right-to-left" evidence="2">
        <dbReference type="Rhea" id="RHEA:41305"/>
    </physiologicalReaction>
</comment>
<comment type="catalytic activity">
    <reaction evidence="2">
        <text>N-(dodecanoyl)-sphinganine + H2O = dodecanoate + sphinganine</text>
        <dbReference type="Rhea" id="RHEA:45448"/>
        <dbReference type="ChEBI" id="CHEBI:15377"/>
        <dbReference type="ChEBI" id="CHEBI:18262"/>
        <dbReference type="ChEBI" id="CHEBI:57817"/>
        <dbReference type="ChEBI" id="CHEBI:85261"/>
    </reaction>
    <physiologicalReaction direction="right-to-left" evidence="2">
        <dbReference type="Rhea" id="RHEA:45450"/>
    </physiologicalReaction>
</comment>
<comment type="catalytic activity">
    <reaction evidence="2">
        <text>N-(acetyl)-sphing-4-enine + H2O = sphing-4-enine + acetate</text>
        <dbReference type="Rhea" id="RHEA:58484"/>
        <dbReference type="ChEBI" id="CHEBI:15377"/>
        <dbReference type="ChEBI" id="CHEBI:30089"/>
        <dbReference type="ChEBI" id="CHEBI:46979"/>
        <dbReference type="ChEBI" id="CHEBI:57756"/>
    </reaction>
    <physiologicalReaction direction="left-to-right" evidence="2">
        <dbReference type="Rhea" id="RHEA:58485"/>
    </physiologicalReaction>
</comment>
<comment type="catalytic activity">
    <reaction evidence="2">
        <text>N-(hexanoyl)sphing-4-enine + H2O = hexanoate + sphing-4-enine</text>
        <dbReference type="Rhea" id="RHEA:41295"/>
        <dbReference type="ChEBI" id="CHEBI:15377"/>
        <dbReference type="ChEBI" id="CHEBI:17120"/>
        <dbReference type="ChEBI" id="CHEBI:57756"/>
        <dbReference type="ChEBI" id="CHEBI:63867"/>
    </reaction>
    <physiologicalReaction direction="left-to-right" evidence="2">
        <dbReference type="Rhea" id="RHEA:41296"/>
    </physiologicalReaction>
</comment>
<comment type="catalytic activity">
    <reaction evidence="2">
        <text>N-octanoylsphing-4-enine + H2O = octanoate + sphing-4-enine</text>
        <dbReference type="Rhea" id="RHEA:45092"/>
        <dbReference type="ChEBI" id="CHEBI:15377"/>
        <dbReference type="ChEBI" id="CHEBI:25646"/>
        <dbReference type="ChEBI" id="CHEBI:45815"/>
        <dbReference type="ChEBI" id="CHEBI:57756"/>
    </reaction>
    <physiologicalReaction direction="left-to-right" evidence="2">
        <dbReference type="Rhea" id="RHEA:45093"/>
    </physiologicalReaction>
</comment>
<comment type="catalytic activity">
    <reaction evidence="2">
        <text>N-(9Z-octadecenoyl)-sphing-4-enine + H2O = sphing-4-enine + (9Z)-octadecenoate</text>
        <dbReference type="Rhea" id="RHEA:41299"/>
        <dbReference type="ChEBI" id="CHEBI:15377"/>
        <dbReference type="ChEBI" id="CHEBI:30823"/>
        <dbReference type="ChEBI" id="CHEBI:57756"/>
        <dbReference type="ChEBI" id="CHEBI:77996"/>
    </reaction>
    <physiologicalReaction direction="left-to-right" evidence="2">
        <dbReference type="Rhea" id="RHEA:41300"/>
    </physiologicalReaction>
</comment>
<comment type="catalytic activity">
    <reaction evidence="2">
        <text>N-dodecanoylethanolamine + H2O = dodecanoate + ethanolamine</text>
        <dbReference type="Rhea" id="RHEA:45456"/>
        <dbReference type="ChEBI" id="CHEBI:15377"/>
        <dbReference type="ChEBI" id="CHEBI:18262"/>
        <dbReference type="ChEBI" id="CHEBI:57603"/>
        <dbReference type="ChEBI" id="CHEBI:85263"/>
    </reaction>
    <physiologicalReaction direction="left-to-right" evidence="2">
        <dbReference type="Rhea" id="RHEA:45457"/>
    </physiologicalReaction>
</comment>
<comment type="pathway">
    <text evidence="2">Lipid metabolism; sphingolipid metabolism.</text>
</comment>
<comment type="subunit">
    <text evidence="2">Heterodimer; disulfide-linked. The heterodimer is composed of the disulfide-linked alpha and beta chains produced by autocatalytic cleavage of the precursor.</text>
</comment>
<comment type="subcellular location">
    <subcellularLocation>
        <location evidence="2">Lysosome</location>
    </subcellularLocation>
    <subcellularLocation>
        <location evidence="2">Secreted</location>
    </subcellularLocation>
    <text evidence="2">Secretion is extremely low and localization to lysosomes is mannose-6-phosphate receptor-dependent.</text>
</comment>
<comment type="PTM">
    <text evidence="2">N-glycosylated.</text>
</comment>
<comment type="PTM">
    <text evidence="2">Proteolytically cleaved into two chains alpha and beta that remain associated via a disulfide bond. Cleavage gives rise to a conformation change that activates the enzyme. The same catalytic Cys residue mediates the autoproteolytic cleavage and subsequent hydrolysis of lipid substrates. The beta chain may undergo an additional C-terminal processing.</text>
</comment>
<comment type="similarity">
    <text evidence="4">Belongs to the acid ceramidase family.</text>
</comment>
<gene>
    <name evidence="2" type="primary">ASAH1</name>
</gene>
<evidence type="ECO:0000250" key="1">
    <source>
        <dbReference type="UniProtKB" id="A0A0P6JG37"/>
    </source>
</evidence>
<evidence type="ECO:0000250" key="2">
    <source>
        <dbReference type="UniProtKB" id="Q13510"/>
    </source>
</evidence>
<evidence type="ECO:0000255" key="3"/>
<evidence type="ECO:0000305" key="4"/>
<protein>
    <recommendedName>
        <fullName evidence="4">Acid ceramidase</fullName>
        <shortName>AC</shortName>
        <shortName>ACDase</shortName>
        <shortName>Acid CDase</shortName>
        <ecNumber evidence="2">3.5.1.23</ecNumber>
    </recommendedName>
    <alternativeName>
        <fullName>Acylsphingosine deacylase</fullName>
    </alternativeName>
    <alternativeName>
        <fullName evidence="2">N-acylethanolamine hydrolase ASAH1</fullName>
        <ecNumber evidence="2">3.5.1.-</ecNumber>
    </alternativeName>
    <alternativeName>
        <fullName>N-acylsphingosine amidohydrolase</fullName>
    </alternativeName>
    <component>
        <recommendedName>
            <fullName evidence="2">Acid ceramidase subunit alpha</fullName>
        </recommendedName>
    </component>
    <component>
        <recommendedName>
            <fullName evidence="2">Acid ceramidase subunit beta</fullName>
        </recommendedName>
    </component>
</protein>
<reference key="1">
    <citation type="submission" date="2006-06" db="EMBL/GenBank/DDBJ databases">
        <authorList>
            <consortium name="NIH - Mammalian Gene Collection (MGC) project"/>
        </authorList>
    </citation>
    <scope>NUCLEOTIDE SEQUENCE [LARGE SCALE MRNA]</scope>
    <source>
        <strain>Hereford</strain>
        <tissue>Fetal cerebellum</tissue>
    </source>
</reference>
<organism>
    <name type="scientific">Bos taurus</name>
    <name type="common">Bovine</name>
    <dbReference type="NCBI Taxonomy" id="9913"/>
    <lineage>
        <taxon>Eukaryota</taxon>
        <taxon>Metazoa</taxon>
        <taxon>Chordata</taxon>
        <taxon>Craniata</taxon>
        <taxon>Vertebrata</taxon>
        <taxon>Euteleostomi</taxon>
        <taxon>Mammalia</taxon>
        <taxon>Eutheria</taxon>
        <taxon>Laurasiatheria</taxon>
        <taxon>Artiodactyla</taxon>
        <taxon>Ruminantia</taxon>
        <taxon>Pecora</taxon>
        <taxon>Bovidae</taxon>
        <taxon>Bovinae</taxon>
        <taxon>Bos</taxon>
    </lineage>
</organism>
<accession>Q17QB3</accession>
<dbReference type="EC" id="3.5.1.23" evidence="2"/>
<dbReference type="EC" id="3.5.1.-" evidence="2"/>
<dbReference type="EMBL" id="BC118455">
    <property type="protein sequence ID" value="AAI18456.3"/>
    <property type="molecule type" value="mRNA"/>
</dbReference>
<dbReference type="RefSeq" id="NP_001068927.1">
    <property type="nucleotide sequence ID" value="NM_001075459.2"/>
</dbReference>
<dbReference type="SMR" id="Q17QB3"/>
<dbReference type="FunCoup" id="Q17QB3">
    <property type="interactions" value="935"/>
</dbReference>
<dbReference type="STRING" id="9913.ENSBTAP00000014960"/>
<dbReference type="MEROPS" id="C89.001"/>
<dbReference type="GlyCosmos" id="Q17QB3">
    <property type="glycosylation" value="4 sites, No reported glycans"/>
</dbReference>
<dbReference type="GlyGen" id="Q17QB3">
    <property type="glycosylation" value="4 sites"/>
</dbReference>
<dbReference type="PaxDb" id="9913-ENSBTAP00000014960"/>
<dbReference type="Ensembl" id="ENSBTAT00000014960.4">
    <property type="protein sequence ID" value="ENSBTAP00000014960.3"/>
    <property type="gene ID" value="ENSBTAG00000011257.5"/>
</dbReference>
<dbReference type="GeneID" id="510620"/>
<dbReference type="KEGG" id="bta:510620"/>
<dbReference type="CTD" id="427"/>
<dbReference type="VEuPathDB" id="HostDB:ENSBTAG00000011257"/>
<dbReference type="VGNC" id="VGNC:26183">
    <property type="gene designation" value="ASAH1"/>
</dbReference>
<dbReference type="eggNOG" id="ENOG502QVBG">
    <property type="taxonomic scope" value="Eukaryota"/>
</dbReference>
<dbReference type="GeneTree" id="ENSGT00530000063548"/>
<dbReference type="HOGENOM" id="CLU_054401_0_0_1"/>
<dbReference type="InParanoid" id="Q17QB3"/>
<dbReference type="OMA" id="GWWMSFL"/>
<dbReference type="OrthoDB" id="5273684at2759"/>
<dbReference type="TreeFam" id="TF313219"/>
<dbReference type="Reactome" id="R-BTA-6798695">
    <property type="pathway name" value="Neutrophil degranulation"/>
</dbReference>
<dbReference type="Reactome" id="R-BTA-9840310">
    <property type="pathway name" value="Glycosphingolipid catabolism"/>
</dbReference>
<dbReference type="UniPathway" id="UPA00222"/>
<dbReference type="Proteomes" id="UP000009136">
    <property type="component" value="Chromosome 27"/>
</dbReference>
<dbReference type="Bgee" id="ENSBTAG00000011257">
    <property type="expression patterns" value="Expressed in zone of skin and 103 other cell types or tissues"/>
</dbReference>
<dbReference type="GO" id="GO:0005615">
    <property type="term" value="C:extracellular space"/>
    <property type="evidence" value="ECO:0000250"/>
    <property type="project" value="UniProtKB"/>
</dbReference>
<dbReference type="GO" id="GO:0005764">
    <property type="term" value="C:lysosome"/>
    <property type="evidence" value="ECO:0000250"/>
    <property type="project" value="UniProtKB"/>
</dbReference>
<dbReference type="GO" id="GO:0016020">
    <property type="term" value="C:membrane"/>
    <property type="evidence" value="ECO:0007669"/>
    <property type="project" value="GOC"/>
</dbReference>
<dbReference type="GO" id="GO:0005634">
    <property type="term" value="C:nucleus"/>
    <property type="evidence" value="ECO:0007669"/>
    <property type="project" value="Ensembl"/>
</dbReference>
<dbReference type="GO" id="GO:0017064">
    <property type="term" value="F:fatty acid amide hydrolase activity"/>
    <property type="evidence" value="ECO:0007669"/>
    <property type="project" value="InterPro"/>
</dbReference>
<dbReference type="GO" id="GO:0017040">
    <property type="term" value="F:N-acylsphingosine amidohydrolase activity"/>
    <property type="evidence" value="ECO:0000250"/>
    <property type="project" value="UniProtKB"/>
</dbReference>
<dbReference type="GO" id="GO:0071356">
    <property type="term" value="P:cellular response to tumor necrosis factor"/>
    <property type="evidence" value="ECO:0000250"/>
    <property type="project" value="UniProtKB"/>
</dbReference>
<dbReference type="GO" id="GO:0046513">
    <property type="term" value="P:ceramide biosynthetic process"/>
    <property type="evidence" value="ECO:0000250"/>
    <property type="project" value="UniProtKB"/>
</dbReference>
<dbReference type="GO" id="GO:0046514">
    <property type="term" value="P:ceramide catabolic process"/>
    <property type="evidence" value="ECO:0000250"/>
    <property type="project" value="UniProtKB"/>
</dbReference>
<dbReference type="GO" id="GO:0006631">
    <property type="term" value="P:fatty acid metabolic process"/>
    <property type="evidence" value="ECO:0007669"/>
    <property type="project" value="InterPro"/>
</dbReference>
<dbReference type="GO" id="GO:0030216">
    <property type="term" value="P:keratinocyte differentiation"/>
    <property type="evidence" value="ECO:0000250"/>
    <property type="project" value="UniProtKB"/>
</dbReference>
<dbReference type="GO" id="GO:0062098">
    <property type="term" value="P:regulation of programmed necrotic cell death"/>
    <property type="evidence" value="ECO:0000250"/>
    <property type="project" value="UniProtKB"/>
</dbReference>
<dbReference type="GO" id="GO:0050810">
    <property type="term" value="P:regulation of steroid biosynthetic process"/>
    <property type="evidence" value="ECO:0000250"/>
    <property type="project" value="UniProtKB"/>
</dbReference>
<dbReference type="GO" id="GO:0046512">
    <property type="term" value="P:sphingosine biosynthetic process"/>
    <property type="evidence" value="ECO:0000250"/>
    <property type="project" value="UniProtKB"/>
</dbReference>
<dbReference type="CDD" id="cd01903">
    <property type="entry name" value="Ntn_AC_NAAA"/>
    <property type="match status" value="1"/>
</dbReference>
<dbReference type="FunFam" id="3.60.60.10:FF:000002">
    <property type="entry name" value="N-acylsphingosine amidohydrolase 1"/>
    <property type="match status" value="1"/>
</dbReference>
<dbReference type="Gene3D" id="3.60.60.10">
    <property type="entry name" value="Penicillin V Acylase, Chain A"/>
    <property type="match status" value="1"/>
</dbReference>
<dbReference type="InterPro" id="IPR016699">
    <property type="entry name" value="Acid_ceramidase-like"/>
</dbReference>
<dbReference type="InterPro" id="IPR029130">
    <property type="entry name" value="Acid_ceramidase_N"/>
</dbReference>
<dbReference type="InterPro" id="IPR029132">
    <property type="entry name" value="CBAH/NAAA_C"/>
</dbReference>
<dbReference type="PANTHER" id="PTHR28583">
    <property type="entry name" value="ACID AMIDASE"/>
    <property type="match status" value="1"/>
</dbReference>
<dbReference type="PANTHER" id="PTHR28583:SF1">
    <property type="entry name" value="ACID CERAMIDASE"/>
    <property type="match status" value="1"/>
</dbReference>
<dbReference type="Pfam" id="PF02275">
    <property type="entry name" value="CBAH"/>
    <property type="match status" value="1"/>
</dbReference>
<dbReference type="Pfam" id="PF15508">
    <property type="entry name" value="NAAA-beta"/>
    <property type="match status" value="1"/>
</dbReference>
<dbReference type="PIRSF" id="PIRSF017632">
    <property type="entry name" value="Acid_ceramidase-like"/>
    <property type="match status" value="1"/>
</dbReference>
<feature type="signal peptide" evidence="3">
    <location>
        <begin position="1"/>
        <end position="20"/>
    </location>
</feature>
<feature type="chain" id="PRO_0000378100" description="Acid ceramidase">
    <location>
        <begin position="21"/>
        <end position="395"/>
    </location>
</feature>
<feature type="chain" id="PRO_0000446280" description="Acid ceramidase subunit alpha" evidence="2">
    <location>
        <begin position="22"/>
        <end position="142"/>
    </location>
</feature>
<feature type="chain" id="PRO_0000446281" description="Acid ceramidase subunit beta" evidence="2">
    <location>
        <begin position="143"/>
        <end position="395"/>
    </location>
</feature>
<feature type="active site" description="Nucleophile" evidence="2">
    <location>
        <position position="143"/>
    </location>
</feature>
<feature type="site" description="Important for catalytic activity" evidence="2">
    <location>
        <position position="162"/>
    </location>
</feature>
<feature type="site" description="Important for catalytic activity" evidence="2">
    <location>
        <position position="320"/>
    </location>
</feature>
<feature type="site" description="Important for catalytic activity" evidence="2">
    <location>
        <position position="333"/>
    </location>
</feature>
<feature type="glycosylation site" description="N-linked (GlcNAc...) asparagine" evidence="3">
    <location>
        <position position="195"/>
    </location>
</feature>
<feature type="glycosylation site" description="N-linked (GlcNAc...) asparagine" evidence="3">
    <location>
        <position position="259"/>
    </location>
</feature>
<feature type="glycosylation site" description="N-linked (GlcNAc...) asparagine" evidence="3">
    <location>
        <position position="286"/>
    </location>
</feature>
<feature type="glycosylation site" description="N-linked (GlcNAc...) asparagine" evidence="3">
    <location>
        <position position="342"/>
    </location>
</feature>
<feature type="disulfide bond" description="Interchain (between alpha and beta subunits)" evidence="2">
    <location>
        <begin position="31"/>
        <end position="340"/>
    </location>
</feature>
<feature type="disulfide bond" evidence="1">
    <location>
        <begin position="388"/>
        <end position="392"/>
    </location>
</feature>